<gene>
    <name evidence="1" type="primary">aroQ</name>
    <name type="ordered locus">PD_0034</name>
</gene>
<name>AROQ_XYLFT</name>
<sequence>MAHLLLLHGPNLNLLGTREPEIYGRITLPQIDAALAERAATAGHGLSSLQSNAEHVLIERIHATREDGTAFILINPGAFTHTSVALRDALLAVALPFVEIHLSNPHTREPFRHHSYLADKALGVVCGFGVDSYRIALEGVIARLGSDV</sequence>
<keyword id="KW-0028">Amino-acid biosynthesis</keyword>
<keyword id="KW-0057">Aromatic amino acid biosynthesis</keyword>
<keyword id="KW-0456">Lyase</keyword>
<keyword id="KW-1185">Reference proteome</keyword>
<proteinExistence type="inferred from homology"/>
<feature type="chain" id="PRO_0000159945" description="3-dehydroquinate dehydratase">
    <location>
        <begin position="1"/>
        <end position="148"/>
    </location>
</feature>
<feature type="active site" description="Proton acceptor" evidence="1">
    <location>
        <position position="23"/>
    </location>
</feature>
<feature type="active site" description="Proton donor" evidence="1">
    <location>
        <position position="101"/>
    </location>
</feature>
<feature type="binding site" evidence="1">
    <location>
        <position position="75"/>
    </location>
    <ligand>
        <name>substrate</name>
    </ligand>
</feature>
<feature type="binding site" evidence="1">
    <location>
        <position position="81"/>
    </location>
    <ligand>
        <name>substrate</name>
    </ligand>
</feature>
<feature type="binding site" evidence="1">
    <location>
        <position position="88"/>
    </location>
    <ligand>
        <name>substrate</name>
    </ligand>
</feature>
<feature type="binding site" evidence="1">
    <location>
        <begin position="102"/>
        <end position="103"/>
    </location>
    <ligand>
        <name>substrate</name>
    </ligand>
</feature>
<feature type="binding site" evidence="1">
    <location>
        <position position="112"/>
    </location>
    <ligand>
        <name>substrate</name>
    </ligand>
</feature>
<feature type="site" description="Transition state stabilizer" evidence="1">
    <location>
        <position position="18"/>
    </location>
</feature>
<organism>
    <name type="scientific">Xylella fastidiosa (strain Temecula1 / ATCC 700964)</name>
    <dbReference type="NCBI Taxonomy" id="183190"/>
    <lineage>
        <taxon>Bacteria</taxon>
        <taxon>Pseudomonadati</taxon>
        <taxon>Pseudomonadota</taxon>
        <taxon>Gammaproteobacteria</taxon>
        <taxon>Lysobacterales</taxon>
        <taxon>Lysobacteraceae</taxon>
        <taxon>Xylella</taxon>
    </lineage>
</organism>
<accession>Q87F94</accession>
<dbReference type="EC" id="4.2.1.10" evidence="1"/>
<dbReference type="EMBL" id="AE009442">
    <property type="protein sequence ID" value="AAO27941.1"/>
    <property type="status" value="ALT_INIT"/>
    <property type="molecule type" value="Genomic_DNA"/>
</dbReference>
<dbReference type="RefSeq" id="WP_004087115.1">
    <property type="nucleotide sequence ID" value="NC_004556.1"/>
</dbReference>
<dbReference type="SMR" id="Q87F94"/>
<dbReference type="GeneID" id="93903724"/>
<dbReference type="KEGG" id="xft:PD_0034"/>
<dbReference type="HOGENOM" id="CLU_090968_1_0_6"/>
<dbReference type="UniPathway" id="UPA00053">
    <property type="reaction ID" value="UER00086"/>
</dbReference>
<dbReference type="Proteomes" id="UP000002516">
    <property type="component" value="Chromosome"/>
</dbReference>
<dbReference type="GO" id="GO:0003855">
    <property type="term" value="F:3-dehydroquinate dehydratase activity"/>
    <property type="evidence" value="ECO:0007669"/>
    <property type="project" value="UniProtKB-UniRule"/>
</dbReference>
<dbReference type="GO" id="GO:0008652">
    <property type="term" value="P:amino acid biosynthetic process"/>
    <property type="evidence" value="ECO:0007669"/>
    <property type="project" value="UniProtKB-KW"/>
</dbReference>
<dbReference type="GO" id="GO:0009073">
    <property type="term" value="P:aromatic amino acid family biosynthetic process"/>
    <property type="evidence" value="ECO:0007669"/>
    <property type="project" value="UniProtKB-KW"/>
</dbReference>
<dbReference type="GO" id="GO:0009423">
    <property type="term" value="P:chorismate biosynthetic process"/>
    <property type="evidence" value="ECO:0007669"/>
    <property type="project" value="UniProtKB-UniRule"/>
</dbReference>
<dbReference type="GO" id="GO:0019631">
    <property type="term" value="P:quinate catabolic process"/>
    <property type="evidence" value="ECO:0007669"/>
    <property type="project" value="TreeGrafter"/>
</dbReference>
<dbReference type="CDD" id="cd00466">
    <property type="entry name" value="DHQase_II"/>
    <property type="match status" value="1"/>
</dbReference>
<dbReference type="Gene3D" id="3.40.50.9100">
    <property type="entry name" value="Dehydroquinase, class II"/>
    <property type="match status" value="1"/>
</dbReference>
<dbReference type="HAMAP" id="MF_00169">
    <property type="entry name" value="AroQ"/>
    <property type="match status" value="1"/>
</dbReference>
<dbReference type="InterPro" id="IPR001874">
    <property type="entry name" value="DHquinase_II"/>
</dbReference>
<dbReference type="InterPro" id="IPR018509">
    <property type="entry name" value="DHquinase_II_CS"/>
</dbReference>
<dbReference type="InterPro" id="IPR036441">
    <property type="entry name" value="DHquinase_II_sf"/>
</dbReference>
<dbReference type="NCBIfam" id="TIGR01088">
    <property type="entry name" value="aroQ"/>
    <property type="match status" value="1"/>
</dbReference>
<dbReference type="NCBIfam" id="NF003804">
    <property type="entry name" value="PRK05395.1-1"/>
    <property type="match status" value="1"/>
</dbReference>
<dbReference type="NCBIfam" id="NF003805">
    <property type="entry name" value="PRK05395.1-2"/>
    <property type="match status" value="1"/>
</dbReference>
<dbReference type="NCBIfam" id="NF003806">
    <property type="entry name" value="PRK05395.1-3"/>
    <property type="match status" value="1"/>
</dbReference>
<dbReference type="NCBIfam" id="NF003807">
    <property type="entry name" value="PRK05395.1-4"/>
    <property type="match status" value="1"/>
</dbReference>
<dbReference type="PANTHER" id="PTHR21272">
    <property type="entry name" value="CATABOLIC 3-DEHYDROQUINASE"/>
    <property type="match status" value="1"/>
</dbReference>
<dbReference type="PANTHER" id="PTHR21272:SF3">
    <property type="entry name" value="CATABOLIC 3-DEHYDROQUINASE"/>
    <property type="match status" value="1"/>
</dbReference>
<dbReference type="Pfam" id="PF01220">
    <property type="entry name" value="DHquinase_II"/>
    <property type="match status" value="1"/>
</dbReference>
<dbReference type="PIRSF" id="PIRSF001399">
    <property type="entry name" value="DHquinase_II"/>
    <property type="match status" value="1"/>
</dbReference>
<dbReference type="SUPFAM" id="SSF52304">
    <property type="entry name" value="Type II 3-dehydroquinate dehydratase"/>
    <property type="match status" value="1"/>
</dbReference>
<dbReference type="PROSITE" id="PS01029">
    <property type="entry name" value="DEHYDROQUINASE_II"/>
    <property type="match status" value="1"/>
</dbReference>
<comment type="function">
    <text evidence="1">Catalyzes a trans-dehydration via an enolate intermediate.</text>
</comment>
<comment type="catalytic activity">
    <reaction evidence="1">
        <text>3-dehydroquinate = 3-dehydroshikimate + H2O</text>
        <dbReference type="Rhea" id="RHEA:21096"/>
        <dbReference type="ChEBI" id="CHEBI:15377"/>
        <dbReference type="ChEBI" id="CHEBI:16630"/>
        <dbReference type="ChEBI" id="CHEBI:32364"/>
        <dbReference type="EC" id="4.2.1.10"/>
    </reaction>
</comment>
<comment type="pathway">
    <text evidence="1">Metabolic intermediate biosynthesis; chorismate biosynthesis; chorismate from D-erythrose 4-phosphate and phosphoenolpyruvate: step 3/7.</text>
</comment>
<comment type="subunit">
    <text evidence="1">Homododecamer.</text>
</comment>
<comment type="similarity">
    <text evidence="1">Belongs to the type-II 3-dehydroquinase family.</text>
</comment>
<comment type="sequence caution" evidence="2">
    <conflict type="erroneous initiation">
        <sequence resource="EMBL-CDS" id="AAO27941"/>
    </conflict>
</comment>
<evidence type="ECO:0000255" key="1">
    <source>
        <dbReference type="HAMAP-Rule" id="MF_00169"/>
    </source>
</evidence>
<evidence type="ECO:0000305" key="2"/>
<protein>
    <recommendedName>
        <fullName evidence="1">3-dehydroquinate dehydratase</fullName>
        <shortName evidence="1">3-dehydroquinase</shortName>
        <ecNumber evidence="1">4.2.1.10</ecNumber>
    </recommendedName>
    <alternativeName>
        <fullName evidence="1">Type II DHQase</fullName>
    </alternativeName>
</protein>
<reference key="1">
    <citation type="journal article" date="2003" name="J. Bacteriol.">
        <title>Comparative analyses of the complete genome sequences of Pierce's disease and citrus variegated chlorosis strains of Xylella fastidiosa.</title>
        <authorList>
            <person name="Van Sluys M.A."/>
            <person name="de Oliveira M.C."/>
            <person name="Monteiro-Vitorello C.B."/>
            <person name="Miyaki C.Y."/>
            <person name="Furlan L.R."/>
            <person name="Camargo L.E.A."/>
            <person name="da Silva A.C.R."/>
            <person name="Moon D.H."/>
            <person name="Takita M.A."/>
            <person name="Lemos E.G.M."/>
            <person name="Machado M.A."/>
            <person name="Ferro M.I.T."/>
            <person name="da Silva F.R."/>
            <person name="Goldman M.H.S."/>
            <person name="Goldman G.H."/>
            <person name="Lemos M.V.F."/>
            <person name="El-Dorry H."/>
            <person name="Tsai S.M."/>
            <person name="Carrer H."/>
            <person name="Carraro D.M."/>
            <person name="de Oliveira R.C."/>
            <person name="Nunes L.R."/>
            <person name="Siqueira W.J."/>
            <person name="Coutinho L.L."/>
            <person name="Kimura E.T."/>
            <person name="Ferro E.S."/>
            <person name="Harakava R."/>
            <person name="Kuramae E.E."/>
            <person name="Marino C.L."/>
            <person name="Giglioti E."/>
            <person name="Abreu I.L."/>
            <person name="Alves L.M.C."/>
            <person name="do Amaral A.M."/>
            <person name="Baia G.S."/>
            <person name="Blanco S.R."/>
            <person name="Brito M.S."/>
            <person name="Cannavan F.S."/>
            <person name="Celestino A.V."/>
            <person name="da Cunha A.F."/>
            <person name="Fenille R.C."/>
            <person name="Ferro J.A."/>
            <person name="Formighieri E.F."/>
            <person name="Kishi L.T."/>
            <person name="Leoni S.G."/>
            <person name="Oliveira A.R."/>
            <person name="Rosa V.E. Jr."/>
            <person name="Sassaki F.T."/>
            <person name="Sena J.A.D."/>
            <person name="de Souza A.A."/>
            <person name="Truffi D."/>
            <person name="Tsukumo F."/>
            <person name="Yanai G.M."/>
            <person name="Zaros L.G."/>
            <person name="Civerolo E.L."/>
            <person name="Simpson A.J.G."/>
            <person name="Almeida N.F. Jr."/>
            <person name="Setubal J.C."/>
            <person name="Kitajima J.P."/>
        </authorList>
    </citation>
    <scope>NUCLEOTIDE SEQUENCE [LARGE SCALE GENOMIC DNA]</scope>
    <source>
        <strain>Temecula1 / ATCC 700964</strain>
    </source>
</reference>